<keyword id="KW-0067">ATP-binding</keyword>
<keyword id="KW-0963">Cytoplasm</keyword>
<keyword id="KW-0324">Glycolysis</keyword>
<keyword id="KW-0418">Kinase</keyword>
<keyword id="KW-0547">Nucleotide-binding</keyword>
<keyword id="KW-0808">Transferase</keyword>
<evidence type="ECO:0000255" key="1">
    <source>
        <dbReference type="HAMAP-Rule" id="MF_00145"/>
    </source>
</evidence>
<accession>B4UEJ2</accession>
<comment type="catalytic activity">
    <reaction evidence="1">
        <text>(2R)-3-phosphoglycerate + ATP = (2R)-3-phospho-glyceroyl phosphate + ADP</text>
        <dbReference type="Rhea" id="RHEA:14801"/>
        <dbReference type="ChEBI" id="CHEBI:30616"/>
        <dbReference type="ChEBI" id="CHEBI:57604"/>
        <dbReference type="ChEBI" id="CHEBI:58272"/>
        <dbReference type="ChEBI" id="CHEBI:456216"/>
        <dbReference type="EC" id="2.7.2.3"/>
    </reaction>
</comment>
<comment type="pathway">
    <text evidence="1">Carbohydrate degradation; glycolysis; pyruvate from D-glyceraldehyde 3-phosphate: step 2/5.</text>
</comment>
<comment type="subunit">
    <text evidence="1">Monomer.</text>
</comment>
<comment type="subcellular location">
    <subcellularLocation>
        <location evidence="1">Cytoplasm</location>
    </subcellularLocation>
</comment>
<comment type="similarity">
    <text evidence="1">Belongs to the phosphoglycerate kinase family.</text>
</comment>
<dbReference type="EC" id="2.7.2.3" evidence="1"/>
<dbReference type="EMBL" id="CP001131">
    <property type="protein sequence ID" value="ACG73563.1"/>
    <property type="molecule type" value="Genomic_DNA"/>
</dbReference>
<dbReference type="RefSeq" id="WP_012526355.1">
    <property type="nucleotide sequence ID" value="NC_011145.1"/>
</dbReference>
<dbReference type="SMR" id="B4UEJ2"/>
<dbReference type="KEGG" id="ank:AnaeK_2336"/>
<dbReference type="HOGENOM" id="CLU_025427_0_2_7"/>
<dbReference type="OrthoDB" id="9808460at2"/>
<dbReference type="UniPathway" id="UPA00109">
    <property type="reaction ID" value="UER00185"/>
</dbReference>
<dbReference type="Proteomes" id="UP000001871">
    <property type="component" value="Chromosome"/>
</dbReference>
<dbReference type="GO" id="GO:0005829">
    <property type="term" value="C:cytosol"/>
    <property type="evidence" value="ECO:0007669"/>
    <property type="project" value="TreeGrafter"/>
</dbReference>
<dbReference type="GO" id="GO:0043531">
    <property type="term" value="F:ADP binding"/>
    <property type="evidence" value="ECO:0007669"/>
    <property type="project" value="TreeGrafter"/>
</dbReference>
<dbReference type="GO" id="GO:0005524">
    <property type="term" value="F:ATP binding"/>
    <property type="evidence" value="ECO:0007669"/>
    <property type="project" value="UniProtKB-KW"/>
</dbReference>
<dbReference type="GO" id="GO:0004618">
    <property type="term" value="F:phosphoglycerate kinase activity"/>
    <property type="evidence" value="ECO:0007669"/>
    <property type="project" value="UniProtKB-UniRule"/>
</dbReference>
<dbReference type="GO" id="GO:0006094">
    <property type="term" value="P:gluconeogenesis"/>
    <property type="evidence" value="ECO:0007669"/>
    <property type="project" value="TreeGrafter"/>
</dbReference>
<dbReference type="GO" id="GO:0006096">
    <property type="term" value="P:glycolytic process"/>
    <property type="evidence" value="ECO:0007669"/>
    <property type="project" value="UniProtKB-UniRule"/>
</dbReference>
<dbReference type="CDD" id="cd00318">
    <property type="entry name" value="Phosphoglycerate_kinase"/>
    <property type="match status" value="1"/>
</dbReference>
<dbReference type="FunFam" id="3.40.50.1260:FF:000003">
    <property type="entry name" value="Phosphoglycerate kinase"/>
    <property type="match status" value="1"/>
</dbReference>
<dbReference type="FunFam" id="3.40.50.1260:FF:000006">
    <property type="entry name" value="Phosphoglycerate kinase"/>
    <property type="match status" value="1"/>
</dbReference>
<dbReference type="Gene3D" id="3.40.50.1260">
    <property type="entry name" value="Phosphoglycerate kinase, N-terminal domain"/>
    <property type="match status" value="2"/>
</dbReference>
<dbReference type="HAMAP" id="MF_00145">
    <property type="entry name" value="Phosphoglyc_kinase"/>
    <property type="match status" value="1"/>
</dbReference>
<dbReference type="InterPro" id="IPR001576">
    <property type="entry name" value="Phosphoglycerate_kinase"/>
</dbReference>
<dbReference type="InterPro" id="IPR015911">
    <property type="entry name" value="Phosphoglycerate_kinase_CS"/>
</dbReference>
<dbReference type="InterPro" id="IPR015824">
    <property type="entry name" value="Phosphoglycerate_kinase_N"/>
</dbReference>
<dbReference type="InterPro" id="IPR036043">
    <property type="entry name" value="Phosphoglycerate_kinase_sf"/>
</dbReference>
<dbReference type="PANTHER" id="PTHR11406">
    <property type="entry name" value="PHOSPHOGLYCERATE KINASE"/>
    <property type="match status" value="1"/>
</dbReference>
<dbReference type="PANTHER" id="PTHR11406:SF23">
    <property type="entry name" value="PHOSPHOGLYCERATE KINASE 1, CHLOROPLASTIC-RELATED"/>
    <property type="match status" value="1"/>
</dbReference>
<dbReference type="Pfam" id="PF00162">
    <property type="entry name" value="PGK"/>
    <property type="match status" value="1"/>
</dbReference>
<dbReference type="PIRSF" id="PIRSF000724">
    <property type="entry name" value="Pgk"/>
    <property type="match status" value="1"/>
</dbReference>
<dbReference type="PRINTS" id="PR00477">
    <property type="entry name" value="PHGLYCKINASE"/>
</dbReference>
<dbReference type="SUPFAM" id="SSF53748">
    <property type="entry name" value="Phosphoglycerate kinase"/>
    <property type="match status" value="1"/>
</dbReference>
<dbReference type="PROSITE" id="PS00111">
    <property type="entry name" value="PGLYCERATE_KINASE"/>
    <property type="match status" value="1"/>
</dbReference>
<reference key="1">
    <citation type="submission" date="2008-08" db="EMBL/GenBank/DDBJ databases">
        <title>Complete sequence of Anaeromyxobacter sp. K.</title>
        <authorList>
            <consortium name="US DOE Joint Genome Institute"/>
            <person name="Lucas S."/>
            <person name="Copeland A."/>
            <person name="Lapidus A."/>
            <person name="Glavina del Rio T."/>
            <person name="Dalin E."/>
            <person name="Tice H."/>
            <person name="Bruce D."/>
            <person name="Goodwin L."/>
            <person name="Pitluck S."/>
            <person name="Saunders E."/>
            <person name="Brettin T."/>
            <person name="Detter J.C."/>
            <person name="Han C."/>
            <person name="Larimer F."/>
            <person name="Land M."/>
            <person name="Hauser L."/>
            <person name="Kyrpides N."/>
            <person name="Ovchinnikiva G."/>
            <person name="Beliaev A."/>
        </authorList>
    </citation>
    <scope>NUCLEOTIDE SEQUENCE [LARGE SCALE GENOMIC DNA]</scope>
    <source>
        <strain>K</strain>
    </source>
</reference>
<proteinExistence type="inferred from homology"/>
<protein>
    <recommendedName>
        <fullName evidence="1">Phosphoglycerate kinase</fullName>
        <ecNumber evidence="1">2.7.2.3</ecNumber>
    </recommendedName>
</protein>
<sequence length="396" mass="42435">MALRTIDALDLAGKRVFIRVDFNVPLDPQGRVTDDARIRAALPTIRHAIQAKAKVILASHLGRPKGKPDDRQKLTLEPAAVRLSELLSQDVILADDCVGDGVKKLVRDLKDGHVLLLENLRFHPEEEKNDEAFARELASLADVWVNDAFGTAHRAHASTAGMARFVKEKAAGFLVQKEVEYLGKALGSPARPFVAIVGGAKVSDKIKVLENLIAKADAICVGGAMAYTFLKAQGVPVGKSLVEEDKLELARQILERAEARKVDLLLPVDHVCGAEPKETAERVVVNDRAIPDGLMGLDIGPKTLDRYRQRIAAAKTVFWNGPMGLFEQKPWSEGTFGVAKAMAASPAVTVVGGGDSAAAVEQAGIVDAMKHVSTGGGASLEFIEGRELPGVKACEE</sequence>
<organism>
    <name type="scientific">Anaeromyxobacter sp. (strain K)</name>
    <dbReference type="NCBI Taxonomy" id="447217"/>
    <lineage>
        <taxon>Bacteria</taxon>
        <taxon>Pseudomonadati</taxon>
        <taxon>Myxococcota</taxon>
        <taxon>Myxococcia</taxon>
        <taxon>Myxococcales</taxon>
        <taxon>Cystobacterineae</taxon>
        <taxon>Anaeromyxobacteraceae</taxon>
        <taxon>Anaeromyxobacter</taxon>
    </lineage>
</organism>
<gene>
    <name evidence="1" type="primary">pgk</name>
    <name type="ordered locus">AnaeK_2336</name>
</gene>
<name>PGK_ANASK</name>
<feature type="chain" id="PRO_1000096320" description="Phosphoglycerate kinase">
    <location>
        <begin position="1"/>
        <end position="396"/>
    </location>
</feature>
<feature type="binding site" evidence="1">
    <location>
        <begin position="21"/>
        <end position="23"/>
    </location>
    <ligand>
        <name>substrate</name>
    </ligand>
</feature>
<feature type="binding site" evidence="1">
    <location>
        <position position="37"/>
    </location>
    <ligand>
        <name>substrate</name>
    </ligand>
</feature>
<feature type="binding site" evidence="1">
    <location>
        <begin position="60"/>
        <end position="63"/>
    </location>
    <ligand>
        <name>substrate</name>
    </ligand>
</feature>
<feature type="binding site" evidence="1">
    <location>
        <position position="121"/>
    </location>
    <ligand>
        <name>substrate</name>
    </ligand>
</feature>
<feature type="binding site" evidence="1">
    <location>
        <position position="154"/>
    </location>
    <ligand>
        <name>substrate</name>
    </ligand>
</feature>
<feature type="binding site" evidence="1">
    <location>
        <position position="205"/>
    </location>
    <ligand>
        <name>ATP</name>
        <dbReference type="ChEBI" id="CHEBI:30616"/>
    </ligand>
</feature>
<feature type="binding site" evidence="1">
    <location>
        <position position="296"/>
    </location>
    <ligand>
        <name>ATP</name>
        <dbReference type="ChEBI" id="CHEBI:30616"/>
    </ligand>
</feature>
<feature type="binding site" evidence="1">
    <location>
        <position position="327"/>
    </location>
    <ligand>
        <name>ATP</name>
        <dbReference type="ChEBI" id="CHEBI:30616"/>
    </ligand>
</feature>
<feature type="binding site" evidence="1">
    <location>
        <begin position="353"/>
        <end position="356"/>
    </location>
    <ligand>
        <name>ATP</name>
        <dbReference type="ChEBI" id="CHEBI:30616"/>
    </ligand>
</feature>